<name>TOL8_ARATH</name>
<sequence>MVHPLVDRATSDMLIGPDWAMNLEICDMLNHEPGQTREVVSGIKKRLTSRTSKVQLLALTLLETIITNCGELIHMQVAEKDILHKMVKMAKRKPNIQVKEKILILIDTWQESFSGPQGRHPQYYAAYQELLRAGIVFPQRPQITPSSGQNGPSTRYPQNSRNARQEAIDTSTESEFPTLSLTEIQNARGIMDVLAEMMNAIDGNNKEGLKQEVVVDLVSQCRTYKQRVVHLVNSTSDESMLCQGLALNDDLQRLLAKHEAIASGNSMIKKEEKSKKEVPKDTTQIIDVGSSETKNGSVVAYTTNGPKIDLLSGDDFETPNADNSLALVPLGPPQPSSPVAKPDNSIVLIDMLSDNNCESSTPTSNPHANHQKVQQNYSNGFGPGHQEQSYYGQGSSAPVWNLQITQQPSSPAYGNQPFSPNFSPPASPHYGGQNNNVLALPPPPWEAQSPSSSPQYSPTHPMQVTQVVITTHTHQPLGYNPQGGSPHATNNNNNNMFGMFLPPMTGGHMPPPFGHNGHVTNNNYNPNMYGGYGGQAQPPQQYLVEQQMYGMSLQDNGNNNTNPYQVSSHQPPPMMKPMNKKPEDKLFGDLVELSKFKKPTSGRAGSM</sequence>
<evidence type="ECO:0000250" key="1">
    <source>
        <dbReference type="UniProtKB" id="Q6NQK0"/>
    </source>
</evidence>
<evidence type="ECO:0000250" key="2">
    <source>
        <dbReference type="UniProtKB" id="Q9LPL6"/>
    </source>
</evidence>
<evidence type="ECO:0000255" key="3">
    <source>
        <dbReference type="PROSITE-ProRule" id="PRU00218"/>
    </source>
</evidence>
<evidence type="ECO:0000255" key="4">
    <source>
        <dbReference type="PROSITE-ProRule" id="PRU00373"/>
    </source>
</evidence>
<evidence type="ECO:0000256" key="5">
    <source>
        <dbReference type="SAM" id="MobiDB-lite"/>
    </source>
</evidence>
<evidence type="ECO:0000269" key="6">
    <source>
    </source>
</evidence>
<evidence type="ECO:0000303" key="7">
    <source>
    </source>
</evidence>
<evidence type="ECO:0000303" key="8">
    <source>
    </source>
</evidence>
<evidence type="ECO:0000305" key="9"/>
<evidence type="ECO:0000305" key="10">
    <source>
    </source>
</evidence>
<evidence type="ECO:0000312" key="11">
    <source>
        <dbReference type="Araport" id="AT3G08790"/>
    </source>
</evidence>
<evidence type="ECO:0000312" key="12">
    <source>
        <dbReference type="EMBL" id="AAG51368.1"/>
    </source>
</evidence>
<reference key="1">
    <citation type="journal article" date="2000" name="Nature">
        <title>Sequence and analysis of chromosome 3 of the plant Arabidopsis thaliana.</title>
        <authorList>
            <person name="Salanoubat M."/>
            <person name="Lemcke K."/>
            <person name="Rieger M."/>
            <person name="Ansorge W."/>
            <person name="Unseld M."/>
            <person name="Fartmann B."/>
            <person name="Valle G."/>
            <person name="Bloecker H."/>
            <person name="Perez-Alonso M."/>
            <person name="Obermaier B."/>
            <person name="Delseny M."/>
            <person name="Boutry M."/>
            <person name="Grivell L.A."/>
            <person name="Mache R."/>
            <person name="Puigdomenech P."/>
            <person name="De Simone V."/>
            <person name="Choisne N."/>
            <person name="Artiguenave F."/>
            <person name="Robert C."/>
            <person name="Brottier P."/>
            <person name="Wincker P."/>
            <person name="Cattolico L."/>
            <person name="Weissenbach J."/>
            <person name="Saurin W."/>
            <person name="Quetier F."/>
            <person name="Schaefer M."/>
            <person name="Mueller-Auer S."/>
            <person name="Gabel C."/>
            <person name="Fuchs M."/>
            <person name="Benes V."/>
            <person name="Wurmbach E."/>
            <person name="Drzonek H."/>
            <person name="Erfle H."/>
            <person name="Jordan N."/>
            <person name="Bangert S."/>
            <person name="Wiedelmann R."/>
            <person name="Kranz H."/>
            <person name="Voss H."/>
            <person name="Holland R."/>
            <person name="Brandt P."/>
            <person name="Nyakatura G."/>
            <person name="Vezzi A."/>
            <person name="D'Angelo M."/>
            <person name="Pallavicini A."/>
            <person name="Toppo S."/>
            <person name="Simionati B."/>
            <person name="Conrad A."/>
            <person name="Hornischer K."/>
            <person name="Kauer G."/>
            <person name="Loehnert T.-H."/>
            <person name="Nordsiek G."/>
            <person name="Reichelt J."/>
            <person name="Scharfe M."/>
            <person name="Schoen O."/>
            <person name="Bargues M."/>
            <person name="Terol J."/>
            <person name="Climent J."/>
            <person name="Navarro P."/>
            <person name="Collado C."/>
            <person name="Perez-Perez A."/>
            <person name="Ottenwaelder B."/>
            <person name="Duchemin D."/>
            <person name="Cooke R."/>
            <person name="Laudie M."/>
            <person name="Berger-Llauro C."/>
            <person name="Purnelle B."/>
            <person name="Masuy D."/>
            <person name="de Haan M."/>
            <person name="Maarse A.C."/>
            <person name="Alcaraz J.-P."/>
            <person name="Cottet A."/>
            <person name="Casacuberta E."/>
            <person name="Monfort A."/>
            <person name="Argiriou A."/>
            <person name="Flores M."/>
            <person name="Liguori R."/>
            <person name="Vitale D."/>
            <person name="Mannhaupt G."/>
            <person name="Haase D."/>
            <person name="Schoof H."/>
            <person name="Rudd S."/>
            <person name="Zaccaria P."/>
            <person name="Mewes H.-W."/>
            <person name="Mayer K.F.X."/>
            <person name="Kaul S."/>
            <person name="Town C.D."/>
            <person name="Koo H.L."/>
            <person name="Tallon L.J."/>
            <person name="Jenkins J."/>
            <person name="Rooney T."/>
            <person name="Rizzo M."/>
            <person name="Walts A."/>
            <person name="Utterback T."/>
            <person name="Fujii C.Y."/>
            <person name="Shea T.P."/>
            <person name="Creasy T.H."/>
            <person name="Haas B."/>
            <person name="Maiti R."/>
            <person name="Wu D."/>
            <person name="Peterson J."/>
            <person name="Van Aken S."/>
            <person name="Pai G."/>
            <person name="Militscher J."/>
            <person name="Sellers P."/>
            <person name="Gill J.E."/>
            <person name="Feldblyum T.V."/>
            <person name="Preuss D."/>
            <person name="Lin X."/>
            <person name="Nierman W.C."/>
            <person name="Salzberg S.L."/>
            <person name="White O."/>
            <person name="Venter J.C."/>
            <person name="Fraser C.M."/>
            <person name="Kaneko T."/>
            <person name="Nakamura Y."/>
            <person name="Sato S."/>
            <person name="Kato T."/>
            <person name="Asamizu E."/>
            <person name="Sasamoto S."/>
            <person name="Kimura T."/>
            <person name="Idesawa K."/>
            <person name="Kawashima K."/>
            <person name="Kishida Y."/>
            <person name="Kiyokawa C."/>
            <person name="Kohara M."/>
            <person name="Matsumoto M."/>
            <person name="Matsuno A."/>
            <person name="Muraki A."/>
            <person name="Nakayama S."/>
            <person name="Nakazaki N."/>
            <person name="Shinpo S."/>
            <person name="Takeuchi C."/>
            <person name="Wada T."/>
            <person name="Watanabe A."/>
            <person name="Yamada M."/>
            <person name="Yasuda M."/>
            <person name="Tabata S."/>
        </authorList>
    </citation>
    <scope>NUCLEOTIDE SEQUENCE [LARGE SCALE GENOMIC DNA]</scope>
    <source>
        <strain>cv. Columbia</strain>
    </source>
</reference>
<reference key="2">
    <citation type="journal article" date="2017" name="Plant J.">
        <title>Araport11: a complete reannotation of the Arabidopsis thaliana reference genome.</title>
        <authorList>
            <person name="Cheng C.Y."/>
            <person name="Krishnakumar V."/>
            <person name="Chan A.P."/>
            <person name="Thibaud-Nissen F."/>
            <person name="Schobel S."/>
            <person name="Town C.D."/>
        </authorList>
    </citation>
    <scope>GENOME REANNOTATION</scope>
    <source>
        <strain>cv. Columbia</strain>
    </source>
</reference>
<reference key="3">
    <citation type="journal article" date="2006" name="Trends Plant Sci.">
        <title>Exploring the ESCRTing machinery in eukaryotes.</title>
        <authorList>
            <person name="Winter V."/>
            <person name="Hauser M.-T."/>
        </authorList>
    </citation>
    <scope>GENE FAMILY</scope>
    <scope>REVIEW</scope>
</reference>
<reference key="4">
    <citation type="journal article" date="2011" name="Front. Plant Sci.">
        <title>Protein-protein interaction network and subcellular localization of the Arabidopsis thaliana ESCRT machinery.</title>
        <authorList>
            <person name="Richardson L.G."/>
            <person name="Howard A.S."/>
            <person name="Khuu N."/>
            <person name="Gidda S.K."/>
            <person name="McCartney A."/>
            <person name="Morphy B.J."/>
            <person name="Mullen R.T."/>
        </authorList>
    </citation>
    <scope>GENE FAMILY</scope>
    <scope>NOMENCLATURE</scope>
</reference>
<reference key="5">
    <citation type="journal article" date="2013" name="Curr. Biol.">
        <title>Arabidopsis TOL proteins act as gatekeepers for vacuolar sorting of PIN2 plasma membrane protein.</title>
        <authorList>
            <person name="Korbei B."/>
            <person name="Moulinier-Anzola J."/>
            <person name="De-Araujo L."/>
            <person name="Lucyshyn D."/>
            <person name="Retzer K."/>
            <person name="Khan M.A."/>
            <person name="Luschnig C."/>
        </authorList>
    </citation>
    <scope>GENE FAMILY</scope>
    <scope>NOMENCLATURE</scope>
</reference>
<reference key="6">
    <citation type="journal article" date="2014" name="Plant Signal. Behav.">
        <title>Expression of Arabidopsis TOL genes.</title>
        <authorList>
            <person name="Moulinier-Anzola J."/>
            <person name="De-Araujo L."/>
            <person name="Korbei B."/>
        </authorList>
    </citation>
    <scope>TISSUE SPECIFICITY</scope>
</reference>
<gene>
    <name evidence="8" type="primary">TOL8</name>
    <name evidence="7" type="synonym">TOM1H</name>
    <name evidence="11" type="ordered locus">At3g08790</name>
    <name evidence="12" type="ORF">F17O14.26</name>
</gene>
<dbReference type="EMBL" id="AC012562">
    <property type="protein sequence ID" value="AAG51368.1"/>
    <property type="molecule type" value="Genomic_DNA"/>
</dbReference>
<dbReference type="EMBL" id="CP002686">
    <property type="protein sequence ID" value="AEE74680.1"/>
    <property type="molecule type" value="Genomic_DNA"/>
</dbReference>
<dbReference type="RefSeq" id="NP_187491.1">
    <property type="nucleotide sequence ID" value="NM_111713.2"/>
</dbReference>
<dbReference type="SMR" id="Q9C9Y1"/>
<dbReference type="FunCoup" id="Q9C9Y1">
    <property type="interactions" value="1442"/>
</dbReference>
<dbReference type="STRING" id="3702.Q9C9Y1"/>
<dbReference type="PaxDb" id="3702-AT3G08790.1"/>
<dbReference type="ProteomicsDB" id="232466"/>
<dbReference type="EnsemblPlants" id="AT3G08790.1">
    <property type="protein sequence ID" value="AT3G08790.1"/>
    <property type="gene ID" value="AT3G08790"/>
</dbReference>
<dbReference type="GeneID" id="820026"/>
<dbReference type="Gramene" id="AT3G08790.1">
    <property type="protein sequence ID" value="AT3G08790.1"/>
    <property type="gene ID" value="AT3G08790"/>
</dbReference>
<dbReference type="KEGG" id="ath:AT3G08790"/>
<dbReference type="Araport" id="AT3G08790"/>
<dbReference type="TAIR" id="AT3G08790"/>
<dbReference type="eggNOG" id="KOG1087">
    <property type="taxonomic scope" value="Eukaryota"/>
</dbReference>
<dbReference type="HOGENOM" id="CLU_026748_2_0_1"/>
<dbReference type="InParanoid" id="Q9C9Y1"/>
<dbReference type="OMA" id="HEPGQTR"/>
<dbReference type="PhylomeDB" id="Q9C9Y1"/>
<dbReference type="PRO" id="PR:Q9C9Y1"/>
<dbReference type="Proteomes" id="UP000006548">
    <property type="component" value="Chromosome 3"/>
</dbReference>
<dbReference type="ExpressionAtlas" id="Q9C9Y1">
    <property type="expression patterns" value="baseline and differential"/>
</dbReference>
<dbReference type="GO" id="GO:0005737">
    <property type="term" value="C:cytoplasm"/>
    <property type="evidence" value="ECO:0007669"/>
    <property type="project" value="UniProtKB-ARBA"/>
</dbReference>
<dbReference type="GO" id="GO:0016020">
    <property type="term" value="C:membrane"/>
    <property type="evidence" value="ECO:0007669"/>
    <property type="project" value="UniProtKB-SubCell"/>
</dbReference>
<dbReference type="GO" id="GO:0035091">
    <property type="term" value="F:phosphatidylinositol binding"/>
    <property type="evidence" value="ECO:0007669"/>
    <property type="project" value="InterPro"/>
</dbReference>
<dbReference type="GO" id="GO:0043130">
    <property type="term" value="F:ubiquitin binding"/>
    <property type="evidence" value="ECO:0007669"/>
    <property type="project" value="InterPro"/>
</dbReference>
<dbReference type="GO" id="GO:0043328">
    <property type="term" value="P:protein transport to vacuole involved in ubiquitin-dependent protein catabolic process via the multivesicular body sorting pathway"/>
    <property type="evidence" value="ECO:0007669"/>
    <property type="project" value="InterPro"/>
</dbReference>
<dbReference type="CDD" id="cd14231">
    <property type="entry name" value="GAT_GGA-like_plant"/>
    <property type="match status" value="1"/>
</dbReference>
<dbReference type="CDD" id="cd03561">
    <property type="entry name" value="VHS"/>
    <property type="match status" value="1"/>
</dbReference>
<dbReference type="FunFam" id="1.25.40.90:FF:000028">
    <property type="entry name" value="TOM1-like protein 2"/>
    <property type="match status" value="1"/>
</dbReference>
<dbReference type="Gene3D" id="1.20.58.160">
    <property type="match status" value="1"/>
</dbReference>
<dbReference type="Gene3D" id="1.25.40.90">
    <property type="match status" value="1"/>
</dbReference>
<dbReference type="InterPro" id="IPR008942">
    <property type="entry name" value="ENTH_VHS"/>
</dbReference>
<dbReference type="InterPro" id="IPR004152">
    <property type="entry name" value="GAT_dom"/>
</dbReference>
<dbReference type="InterPro" id="IPR038425">
    <property type="entry name" value="GAT_sf"/>
</dbReference>
<dbReference type="InterPro" id="IPR044836">
    <property type="entry name" value="TOL_plant"/>
</dbReference>
<dbReference type="InterPro" id="IPR002014">
    <property type="entry name" value="VHS_dom"/>
</dbReference>
<dbReference type="PANTHER" id="PTHR45898">
    <property type="entry name" value="TOM1-LIKE PROTEIN"/>
    <property type="match status" value="1"/>
</dbReference>
<dbReference type="PANTHER" id="PTHR45898:SF9">
    <property type="entry name" value="TOM1-LIKE PROTEIN 8"/>
    <property type="match status" value="1"/>
</dbReference>
<dbReference type="Pfam" id="PF03127">
    <property type="entry name" value="GAT"/>
    <property type="match status" value="1"/>
</dbReference>
<dbReference type="Pfam" id="PF00790">
    <property type="entry name" value="VHS"/>
    <property type="match status" value="1"/>
</dbReference>
<dbReference type="SMART" id="SM00288">
    <property type="entry name" value="VHS"/>
    <property type="match status" value="1"/>
</dbReference>
<dbReference type="SUPFAM" id="SSF48464">
    <property type="entry name" value="ENTH/VHS domain"/>
    <property type="match status" value="1"/>
</dbReference>
<dbReference type="SUPFAM" id="SSF89009">
    <property type="entry name" value="GAT-like domain"/>
    <property type="match status" value="1"/>
</dbReference>
<dbReference type="PROSITE" id="PS50909">
    <property type="entry name" value="GAT"/>
    <property type="match status" value="1"/>
</dbReference>
<dbReference type="PROSITE" id="PS50179">
    <property type="entry name" value="VHS"/>
    <property type="match status" value="1"/>
</dbReference>
<proteinExistence type="evidence at transcript level"/>
<accession>Q9C9Y1</accession>
<feature type="chain" id="PRO_0000440683" description="TOM1-like protein 8">
    <location>
        <begin position="1"/>
        <end position="607"/>
    </location>
</feature>
<feature type="domain" description="VHS" evidence="3">
    <location>
        <begin position="9"/>
        <end position="138"/>
    </location>
</feature>
<feature type="domain" description="GAT" evidence="4">
    <location>
        <begin position="175"/>
        <end position="263"/>
    </location>
</feature>
<feature type="region of interest" description="Disordered" evidence="5">
    <location>
        <begin position="141"/>
        <end position="175"/>
    </location>
</feature>
<feature type="region of interest" description="Disordered" evidence="5">
    <location>
        <begin position="355"/>
        <end position="393"/>
    </location>
</feature>
<feature type="region of interest" description="Disordered" evidence="5">
    <location>
        <begin position="407"/>
        <end position="460"/>
    </location>
</feature>
<feature type="region of interest" description="Disordered" evidence="5">
    <location>
        <begin position="555"/>
        <end position="582"/>
    </location>
</feature>
<feature type="compositionally biased region" description="Polar residues" evidence="5">
    <location>
        <begin position="355"/>
        <end position="379"/>
    </location>
</feature>
<feature type="compositionally biased region" description="Low complexity" evidence="5">
    <location>
        <begin position="448"/>
        <end position="460"/>
    </location>
</feature>
<feature type="compositionally biased region" description="Polar residues" evidence="5">
    <location>
        <begin position="555"/>
        <end position="569"/>
    </location>
</feature>
<feature type="modified residue" description="Phosphoserine" evidence="1">
    <location>
        <position position="297"/>
    </location>
</feature>
<feature type="modified residue" description="Phosphoserine" evidence="2">
    <location>
        <position position="410"/>
    </location>
</feature>
<organism>
    <name type="scientific">Arabidopsis thaliana</name>
    <name type="common">Mouse-ear cress</name>
    <dbReference type="NCBI Taxonomy" id="3702"/>
    <lineage>
        <taxon>Eukaryota</taxon>
        <taxon>Viridiplantae</taxon>
        <taxon>Streptophyta</taxon>
        <taxon>Embryophyta</taxon>
        <taxon>Tracheophyta</taxon>
        <taxon>Spermatophyta</taxon>
        <taxon>Magnoliopsida</taxon>
        <taxon>eudicotyledons</taxon>
        <taxon>Gunneridae</taxon>
        <taxon>Pentapetalae</taxon>
        <taxon>rosids</taxon>
        <taxon>malvids</taxon>
        <taxon>Brassicales</taxon>
        <taxon>Brassicaceae</taxon>
        <taxon>Camelineae</taxon>
        <taxon>Arabidopsis</taxon>
    </lineage>
</organism>
<comment type="function">
    <text evidence="10">Might contribute to the loading of the ESCRT machinery.</text>
</comment>
<comment type="subcellular location">
    <subcellularLocation>
        <location evidence="9">Membrane</location>
        <topology evidence="9">Peripheral membrane protein</topology>
    </subcellularLocation>
</comment>
<comment type="tissue specificity">
    <text evidence="6">Specifically expressed in siliques and flowers.</text>
</comment>
<comment type="similarity">
    <text evidence="9">Belongs to the TOM1 family.</text>
</comment>
<protein>
    <recommendedName>
        <fullName evidence="9">TOM1-like protein 8</fullName>
    </recommendedName>
</protein>
<keyword id="KW-0472">Membrane</keyword>
<keyword id="KW-0597">Phosphoprotein</keyword>
<keyword id="KW-0653">Protein transport</keyword>
<keyword id="KW-1185">Reference proteome</keyword>
<keyword id="KW-0813">Transport</keyword>